<name>CFA45_PIG</name>
<accession>A0A480NP79</accession>
<accession>F1RJW3</accession>
<sequence length="549" mass="65493">MPLSPAGVLSSTSTASNRSRNRPRYRTKALSSEVDESLFGGIKPLNQSDSPIVLLRDKHAIRKTLTALGLDHKPETIQLITRDMVRELIIPTKDPSGESLIMSPEEFERIRWASHVPTREELEAKEQACKKEKEAIVDAVTTRKKIMKQKEMVSRNNQKLSDLEEVAKERAQNLLQRASQLRMEQEEELKDMKKIILNAKCHAIRDAQILEKQLIQKELDAEEKRLDQMMEVERQKSIQRQEELDKKRREERIRGRRHIVEQMEKNQEERSLLAEQREQEKEQMLEYMEQLQEEDLRDLERRHQQKLKMQAEIKRINDENQKQKAELLAQEKLADQMVMEFTKKKMAREAEFEAEQERIRREKEKEISRLRALQEKVQDYQAEQDALRAKRNQEVADREWRRKEKENAQKKMETEAQLRKSRLEQVAFKEHSLAVQVQRDRDEFERILRAQREQIEKEQQEEEKKAMERLQHANELRRQVRENQQKQVQDRIAIFEEGQRLKEEAQKRRERIEGIKKKKIEELRATGLPEKYCIEAERKANIPTNTSVN</sequence>
<comment type="function">
    <text evidence="1 3">Microtubule inner protein (MIP) part of the dynein-decorated doublet microtubules (DMTs) in cilia axoneme, which is required for motile cilia beating (By similarity). It is an AMP-binding protein that may facilitate dynein ATPase-dependent ciliary and flagellar beating via adenine nucleotide homeostasis. May function as a donor of AMP to AK8 and hence promote ADP production (By similarity).</text>
</comment>
<comment type="subunit">
    <text evidence="2 6">Microtubule inner protein component of sperm flagellar doublet microtubules (By similarity). Interacts with AK8; dimerization with AK8 may create a cavity at the interface of the dimer that can accommodate AMP (PubMed:33139725). Interacts with CFAP52 (PubMed:33139725). Interacts with ENKUR (PubMed:33139725). Directly interacts with DNALI1 (PubMed:33139725). Interacts with DNAH11 (PubMed:33139725). Interacts with DNAI1 (PubMed:33139725).</text>
</comment>
<comment type="subcellular location">
    <subcellularLocation>
        <location evidence="6">Cytoplasm</location>
        <location evidence="6">Cytoskeleton</location>
        <location evidence="6">Cilium axoneme</location>
    </subcellularLocation>
    <subcellularLocation>
        <location evidence="6">Cytoplasm</location>
        <location evidence="6">Cytoskeleton</location>
        <location evidence="6">Flagellum axoneme</location>
    </subcellularLocation>
    <subcellularLocation>
        <location evidence="3">Cell projection</location>
        <location evidence="3">Cilium</location>
    </subcellularLocation>
    <subcellularLocation>
        <location evidence="3">Cell projection</location>
        <location evidence="3">Cilium</location>
        <location evidence="3">Flagellum</location>
    </subcellularLocation>
    <text evidence="3">Located in the proximal region of respiratory cilia.</text>
</comment>
<comment type="tissue specificity">
    <text evidence="6">Expressed in respiratory cells (at protein level).</text>
</comment>
<comment type="similarity">
    <text evidence="7">Belongs to the CFAP45 family.</text>
</comment>
<reference key="1">
    <citation type="submission" date="2009-11" db="EMBL/GenBank/DDBJ databases">
        <authorList>
            <consortium name="Porcine genome sequencing project"/>
        </authorList>
    </citation>
    <scope>NUCLEOTIDE SEQUENCE [LARGE SCALE GENOMIC DNA]</scope>
    <source>
        <strain>Duroc</strain>
    </source>
</reference>
<reference key="2">
    <citation type="journal article" date="2019" name="PeerJ">
        <title>Genes of the pig, Sus scrofa, reconstructed with EvidentialGene.</title>
        <authorList>
            <person name="Gilbert D.G."/>
        </authorList>
    </citation>
    <scope>IDENTIFICATION</scope>
</reference>
<reference key="3">
    <citation type="journal article" date="2020" name="Nat. Commun.">
        <title>CFAP45 deficiency causes situs abnormalities and asthenospermia by disrupting an axonemal adenine nucleotide homeostasis module.</title>
        <authorList>
            <person name="Dougherty G.W."/>
            <person name="Mizuno K."/>
            <person name="Noethe-Menchen T."/>
            <person name="Ikawa Y."/>
            <person name="Boldt K."/>
            <person name="Ta-Shma A."/>
            <person name="Aprea I."/>
            <person name="Minegishi K."/>
            <person name="Pang Y.P."/>
            <person name="Pennekamp P."/>
            <person name="Loges N.T."/>
            <person name="Raidt J."/>
            <person name="Hjeij R."/>
            <person name="Wallmeier J."/>
            <person name="Mussaffi H."/>
            <person name="Perles Z."/>
            <person name="Elpeleg O."/>
            <person name="Rabert F."/>
            <person name="Shiratori H."/>
            <person name="Letteboer S.J."/>
            <person name="Horn N."/>
            <person name="Young S."/>
            <person name="Struenker T."/>
            <person name="Stumme F."/>
            <person name="Werner C."/>
            <person name="Olbrich H."/>
            <person name="Takaoka K."/>
            <person name="Ide T."/>
            <person name="Twan W.K."/>
            <person name="Biebach L."/>
            <person name="Grosse-Onnebrink J."/>
            <person name="Klinkenbusch J.A."/>
            <person name="Praveen K."/>
            <person name="Bracht D.C."/>
            <person name="Hoeben I.M."/>
            <person name="Junger K."/>
            <person name="Guetzlaff J."/>
            <person name="Cindric S."/>
            <person name="Aviram M."/>
            <person name="Kaiser T."/>
            <person name="Memari Y."/>
            <person name="Dzeja P.P."/>
            <person name="Dworniczak B."/>
            <person name="Ueffing M."/>
            <person name="Roepman R."/>
            <person name="Bartscherer K."/>
            <person name="Katsanis N."/>
            <person name="Davis E.E."/>
            <person name="Amirav I."/>
            <person name="Hamada H."/>
            <person name="Omran H."/>
        </authorList>
    </citation>
    <scope>INTERACTION WITH AK8; CFAP52; DNAH11; DNAI1; DNALI1 AND ENKUR</scope>
    <scope>SUBCELLULAR LOCATION</scope>
    <scope>TISSUE SPECIFICITY</scope>
</reference>
<feature type="chain" id="PRO_0000454203" description="Cilia- and flagella-associated protein 45">
    <location>
        <begin position="1"/>
        <end position="549"/>
    </location>
</feature>
<feature type="region of interest" description="Disordered" evidence="5">
    <location>
        <begin position="1"/>
        <end position="29"/>
    </location>
</feature>
<feature type="region of interest" description="Disordered" evidence="5">
    <location>
        <begin position="388"/>
        <end position="416"/>
    </location>
</feature>
<feature type="coiled-coil region" evidence="4">
    <location>
        <begin position="119"/>
        <end position="232"/>
    </location>
</feature>
<feature type="coiled-coil region" evidence="4">
    <location>
        <begin position="259"/>
        <end position="393"/>
    </location>
</feature>
<feature type="coiled-coil region" evidence="4">
    <location>
        <begin position="434"/>
        <end position="522"/>
    </location>
</feature>
<proteinExistence type="evidence at protein level"/>
<protein>
    <recommendedName>
        <fullName>Cilia- and flagella-associated protein 45</fullName>
    </recommendedName>
</protein>
<evidence type="ECO:0000250" key="1">
    <source>
        <dbReference type="UniProtKB" id="Q32LN4"/>
    </source>
</evidence>
<evidence type="ECO:0000250" key="2">
    <source>
        <dbReference type="UniProtKB" id="Q9D9U9"/>
    </source>
</evidence>
<evidence type="ECO:0000250" key="3">
    <source>
        <dbReference type="UniProtKB" id="Q9UL16"/>
    </source>
</evidence>
<evidence type="ECO:0000255" key="4"/>
<evidence type="ECO:0000256" key="5">
    <source>
        <dbReference type="SAM" id="MobiDB-lite"/>
    </source>
</evidence>
<evidence type="ECO:0000269" key="6">
    <source>
    </source>
</evidence>
<evidence type="ECO:0000305" key="7"/>
<organism>
    <name type="scientific">Sus scrofa</name>
    <name type="common">Pig</name>
    <dbReference type="NCBI Taxonomy" id="9823"/>
    <lineage>
        <taxon>Eukaryota</taxon>
        <taxon>Metazoa</taxon>
        <taxon>Chordata</taxon>
        <taxon>Craniata</taxon>
        <taxon>Vertebrata</taxon>
        <taxon>Euteleostomi</taxon>
        <taxon>Mammalia</taxon>
        <taxon>Eutheria</taxon>
        <taxon>Laurasiatheria</taxon>
        <taxon>Artiodactyla</taxon>
        <taxon>Suina</taxon>
        <taxon>Suidae</taxon>
        <taxon>Sus</taxon>
    </lineage>
</organism>
<gene>
    <name type="primary">CFAP45</name>
</gene>
<dbReference type="EMBL" id="AEMK02000022">
    <property type="status" value="NOT_ANNOTATED_CDS"/>
    <property type="molecule type" value="Genomic_DNA"/>
</dbReference>
<dbReference type="EMBL" id="DQIR01143952">
    <property type="protein sequence ID" value="HDA99428.1"/>
    <property type="molecule type" value="mRNA"/>
</dbReference>
<dbReference type="EMBL" id="DQIR01205046">
    <property type="protein sequence ID" value="HDB60523.1"/>
    <property type="molecule type" value="mRNA"/>
</dbReference>
<dbReference type="RefSeq" id="XP_020945245.1">
    <property type="nucleotide sequence ID" value="XM_021089586.1"/>
</dbReference>
<dbReference type="PDB" id="9CPC">
    <property type="method" value="EM"/>
    <property type="resolution" value="3.65 A"/>
    <property type="chains" value="1W/1X/1Y/1Z=1-549"/>
</dbReference>
<dbReference type="PDBsum" id="9CPC"/>
<dbReference type="EMDB" id="EMD-45802"/>
<dbReference type="SMR" id="A0A480NP79"/>
<dbReference type="FunCoup" id="A0A480NP79">
    <property type="interactions" value="185"/>
</dbReference>
<dbReference type="PaxDb" id="9823-ENSSSCP00000006817"/>
<dbReference type="Ensembl" id="ENSSSCT00000007007.4">
    <property type="protein sequence ID" value="ENSSSCP00000006817.3"/>
    <property type="gene ID" value="ENSSSCG00000006394.4"/>
</dbReference>
<dbReference type="Ensembl" id="ENSSSCT00025007006.1">
    <property type="protein sequence ID" value="ENSSSCP00025002875.1"/>
    <property type="gene ID" value="ENSSSCG00025005205.1"/>
</dbReference>
<dbReference type="Ensembl" id="ENSSSCT00035025353.1">
    <property type="protein sequence ID" value="ENSSSCP00035009586.1"/>
    <property type="gene ID" value="ENSSSCG00035019569.1"/>
</dbReference>
<dbReference type="Ensembl" id="ENSSSCT00040028893.1">
    <property type="protein sequence ID" value="ENSSSCP00040012121.1"/>
    <property type="gene ID" value="ENSSSCG00040021455.1"/>
</dbReference>
<dbReference type="Ensembl" id="ENSSSCT00045006728.1">
    <property type="protein sequence ID" value="ENSSSCP00045004598.1"/>
    <property type="gene ID" value="ENSSSCG00045004043.1"/>
</dbReference>
<dbReference type="Ensembl" id="ENSSSCT00055056656.1">
    <property type="protein sequence ID" value="ENSSSCP00055045297.1"/>
    <property type="gene ID" value="ENSSSCG00055028529.1"/>
</dbReference>
<dbReference type="Ensembl" id="ENSSSCT00060073635.1">
    <property type="protein sequence ID" value="ENSSSCP00060031753.1"/>
    <property type="gene ID" value="ENSSSCG00060054085.1"/>
</dbReference>
<dbReference type="Ensembl" id="ENSSSCT00085048341">
    <property type="protein sequence ID" value="ENSSSCP00085033820"/>
    <property type="gene ID" value="ENSSSCG00085025180"/>
</dbReference>
<dbReference type="Ensembl" id="ENSSSCT00085048346">
    <property type="protein sequence ID" value="ENSSSCP00085033823"/>
    <property type="gene ID" value="ENSSSCG00085025180"/>
</dbReference>
<dbReference type="Ensembl" id="ENSSSCT00105029825">
    <property type="protein sequence ID" value="ENSSSCP00105020755"/>
    <property type="gene ID" value="ENSSSCG00105015454"/>
</dbReference>
<dbReference type="Ensembl" id="ENSSSCT00105029838">
    <property type="protein sequence ID" value="ENSSSCP00105020763"/>
    <property type="gene ID" value="ENSSSCG00105015454"/>
</dbReference>
<dbReference type="Ensembl" id="ENSSSCT00110076736">
    <property type="protein sequence ID" value="ENSSSCP00110054177"/>
    <property type="gene ID" value="ENSSSCG00110040171"/>
</dbReference>
<dbReference type="Ensembl" id="ENSSSCT00110076738">
    <property type="protein sequence ID" value="ENSSSCP00110054179"/>
    <property type="gene ID" value="ENSSSCG00110040171"/>
</dbReference>
<dbReference type="Ensembl" id="ENSSSCT00115034952">
    <property type="protein sequence ID" value="ENSSSCP00115033143"/>
    <property type="gene ID" value="ENSSSCG00115019747"/>
</dbReference>
<dbReference type="Ensembl" id="ENSSSCT00130021380">
    <property type="protein sequence ID" value="ENSSSCP00130014588"/>
    <property type="gene ID" value="ENSSSCG00130011242"/>
</dbReference>
<dbReference type="Ensembl" id="ENSSSCT00130021383">
    <property type="protein sequence ID" value="ENSSSCP00130014589"/>
    <property type="gene ID" value="ENSSSCG00130011242"/>
</dbReference>
<dbReference type="GeneID" id="100515727"/>
<dbReference type="VGNC" id="VGNC:86600">
    <property type="gene designation" value="CFAP45"/>
</dbReference>
<dbReference type="eggNOG" id="ENOG502QPRZ">
    <property type="taxonomic scope" value="Eukaryota"/>
</dbReference>
<dbReference type="GeneTree" id="ENSGT00730000111174"/>
<dbReference type="HOGENOM" id="CLU_026959_1_0_1"/>
<dbReference type="InParanoid" id="A0A480NP79"/>
<dbReference type="OrthoDB" id="1902038at2759"/>
<dbReference type="TreeFam" id="TF327685"/>
<dbReference type="Proteomes" id="UP000008227">
    <property type="component" value="Chromosome 4"/>
</dbReference>
<dbReference type="Proteomes" id="UP000314985">
    <property type="component" value="Unplaced"/>
</dbReference>
<dbReference type="Proteomes" id="UP000694570">
    <property type="component" value="Unplaced"/>
</dbReference>
<dbReference type="Proteomes" id="UP000694571">
    <property type="component" value="Unplaced"/>
</dbReference>
<dbReference type="Proteomes" id="UP000694720">
    <property type="component" value="Unplaced"/>
</dbReference>
<dbReference type="Proteomes" id="UP000694722">
    <property type="component" value="Unplaced"/>
</dbReference>
<dbReference type="Proteomes" id="UP000694723">
    <property type="component" value="Unplaced"/>
</dbReference>
<dbReference type="Proteomes" id="UP000694724">
    <property type="component" value="Unplaced"/>
</dbReference>
<dbReference type="Proteomes" id="UP000694725">
    <property type="component" value="Unplaced"/>
</dbReference>
<dbReference type="Proteomes" id="UP000694726">
    <property type="component" value="Unplaced"/>
</dbReference>
<dbReference type="Proteomes" id="UP000694727">
    <property type="component" value="Unplaced"/>
</dbReference>
<dbReference type="Proteomes" id="UP000694728">
    <property type="component" value="Unplaced"/>
</dbReference>
<dbReference type="Bgee" id="ENSSSCG00000006394">
    <property type="expression patterns" value="Expressed in testis and 18 other cell types or tissues"/>
</dbReference>
<dbReference type="ExpressionAtlas" id="A0A480NP79">
    <property type="expression patterns" value="baseline"/>
</dbReference>
<dbReference type="GO" id="GO:0097729">
    <property type="term" value="C:9+2 motile cilium"/>
    <property type="evidence" value="ECO:0000314"/>
    <property type="project" value="GO_Central"/>
</dbReference>
<dbReference type="GO" id="GO:0160112">
    <property type="term" value="C:axonemal B tubule inner sheath"/>
    <property type="evidence" value="ECO:0000250"/>
    <property type="project" value="UniProtKB"/>
</dbReference>
<dbReference type="GO" id="GO:0005879">
    <property type="term" value="C:axonemal microtubule"/>
    <property type="evidence" value="ECO:0000250"/>
    <property type="project" value="UniProtKB"/>
</dbReference>
<dbReference type="GO" id="GO:0005930">
    <property type="term" value="C:axoneme"/>
    <property type="evidence" value="ECO:0000314"/>
    <property type="project" value="GO_Central"/>
</dbReference>
<dbReference type="GO" id="GO:0005929">
    <property type="term" value="C:cilium"/>
    <property type="evidence" value="ECO:0000250"/>
    <property type="project" value="UniProtKB"/>
</dbReference>
<dbReference type="GO" id="GO:0036126">
    <property type="term" value="C:sperm flagellum"/>
    <property type="evidence" value="ECO:0000250"/>
    <property type="project" value="UniProtKB"/>
</dbReference>
<dbReference type="GO" id="GO:0030317">
    <property type="term" value="P:flagellated sperm motility"/>
    <property type="evidence" value="ECO:0000250"/>
    <property type="project" value="UniProtKB"/>
</dbReference>
<dbReference type="InterPro" id="IPR033253">
    <property type="entry name" value="CFAP45"/>
</dbReference>
<dbReference type="InterPro" id="IPR043597">
    <property type="entry name" value="TPH_dom"/>
</dbReference>
<dbReference type="PANTHER" id="PTHR15504:SF0">
    <property type="entry name" value="CILIA- AND FLAGELLA-ASSOCIATED PROTEIN 45"/>
    <property type="match status" value="1"/>
</dbReference>
<dbReference type="PANTHER" id="PTHR15504">
    <property type="entry name" value="NASOPHARYNGEAL EPITHELIUM SPECIFIC PROTEIN 1"/>
    <property type="match status" value="1"/>
</dbReference>
<dbReference type="Pfam" id="PF13868">
    <property type="entry name" value="TPH"/>
    <property type="match status" value="1"/>
</dbReference>
<keyword id="KW-0002">3D-structure</keyword>
<keyword id="KW-0966">Cell projection</keyword>
<keyword id="KW-0969">Cilium</keyword>
<keyword id="KW-0175">Coiled coil</keyword>
<keyword id="KW-0963">Cytoplasm</keyword>
<keyword id="KW-0206">Cytoskeleton</keyword>
<keyword id="KW-0282">Flagellum</keyword>
<keyword id="KW-1185">Reference proteome</keyword>